<name>MRAY_LEVBA</name>
<proteinExistence type="inferred from homology"/>
<organism>
    <name type="scientific">Levilactobacillus brevis (strain ATCC 367 / BCRC 12310 / CIP 105137 / JCM 1170 / LMG 11437 / NCIMB 947 / NCTC 947)</name>
    <name type="common">Lactobacillus brevis</name>
    <dbReference type="NCBI Taxonomy" id="387344"/>
    <lineage>
        <taxon>Bacteria</taxon>
        <taxon>Bacillati</taxon>
        <taxon>Bacillota</taxon>
        <taxon>Bacilli</taxon>
        <taxon>Lactobacillales</taxon>
        <taxon>Lactobacillaceae</taxon>
        <taxon>Levilactobacillus</taxon>
    </lineage>
</organism>
<protein>
    <recommendedName>
        <fullName evidence="1">Phospho-N-acetylmuramoyl-pentapeptide-transferase</fullName>
        <ecNumber evidence="1">2.7.8.13</ecNumber>
    </recommendedName>
    <alternativeName>
        <fullName evidence="1">UDP-MurNAc-pentapeptide phosphotransferase</fullName>
    </alternativeName>
</protein>
<reference key="1">
    <citation type="journal article" date="2006" name="Proc. Natl. Acad. Sci. U.S.A.">
        <title>Comparative genomics of the lactic acid bacteria.</title>
        <authorList>
            <person name="Makarova K.S."/>
            <person name="Slesarev A."/>
            <person name="Wolf Y.I."/>
            <person name="Sorokin A."/>
            <person name="Mirkin B."/>
            <person name="Koonin E.V."/>
            <person name="Pavlov A."/>
            <person name="Pavlova N."/>
            <person name="Karamychev V."/>
            <person name="Polouchine N."/>
            <person name="Shakhova V."/>
            <person name="Grigoriev I."/>
            <person name="Lou Y."/>
            <person name="Rohksar D."/>
            <person name="Lucas S."/>
            <person name="Huang K."/>
            <person name="Goodstein D.M."/>
            <person name="Hawkins T."/>
            <person name="Plengvidhya V."/>
            <person name="Welker D."/>
            <person name="Hughes J."/>
            <person name="Goh Y."/>
            <person name="Benson A."/>
            <person name="Baldwin K."/>
            <person name="Lee J.-H."/>
            <person name="Diaz-Muniz I."/>
            <person name="Dosti B."/>
            <person name="Smeianov V."/>
            <person name="Wechter W."/>
            <person name="Barabote R."/>
            <person name="Lorca G."/>
            <person name="Altermann E."/>
            <person name="Barrangou R."/>
            <person name="Ganesan B."/>
            <person name="Xie Y."/>
            <person name="Rawsthorne H."/>
            <person name="Tamir D."/>
            <person name="Parker C."/>
            <person name="Breidt F."/>
            <person name="Broadbent J.R."/>
            <person name="Hutkins R."/>
            <person name="O'Sullivan D."/>
            <person name="Steele J."/>
            <person name="Unlu G."/>
            <person name="Saier M.H. Jr."/>
            <person name="Klaenhammer T."/>
            <person name="Richardson P."/>
            <person name="Kozyavkin S."/>
            <person name="Weimer B.C."/>
            <person name="Mills D.A."/>
        </authorList>
    </citation>
    <scope>NUCLEOTIDE SEQUENCE [LARGE SCALE GENOMIC DNA]</scope>
    <source>
        <strain>ATCC 367 / BCRC 12310 / CIP 105137 / JCM 1170 / LMG 11437 / NCIMB 947 / NCTC 947</strain>
    </source>
</reference>
<evidence type="ECO:0000255" key="1">
    <source>
        <dbReference type="HAMAP-Rule" id="MF_00038"/>
    </source>
</evidence>
<feature type="chain" id="PRO_0000332537" description="Phospho-N-acetylmuramoyl-pentapeptide-transferase">
    <location>
        <begin position="1"/>
        <end position="323"/>
    </location>
</feature>
<feature type="transmembrane region" description="Helical" evidence="1">
    <location>
        <begin position="3"/>
        <end position="23"/>
    </location>
</feature>
<feature type="transmembrane region" description="Helical" evidence="1">
    <location>
        <begin position="52"/>
        <end position="72"/>
    </location>
</feature>
<feature type="transmembrane region" description="Helical" evidence="1">
    <location>
        <begin position="77"/>
        <end position="97"/>
    </location>
</feature>
<feature type="transmembrane region" description="Helical" evidence="1">
    <location>
        <begin position="121"/>
        <end position="141"/>
    </location>
</feature>
<feature type="transmembrane region" description="Helical" evidence="1">
    <location>
        <begin position="145"/>
        <end position="165"/>
    </location>
</feature>
<feature type="transmembrane region" description="Helical" evidence="1">
    <location>
        <begin position="175"/>
        <end position="195"/>
    </location>
</feature>
<feature type="transmembrane region" description="Helical" evidence="1">
    <location>
        <begin position="200"/>
        <end position="220"/>
    </location>
</feature>
<feature type="transmembrane region" description="Helical" evidence="1">
    <location>
        <begin position="226"/>
        <end position="248"/>
    </location>
</feature>
<feature type="transmembrane region" description="Helical" evidence="1">
    <location>
        <begin position="301"/>
        <end position="321"/>
    </location>
</feature>
<keyword id="KW-0131">Cell cycle</keyword>
<keyword id="KW-0132">Cell division</keyword>
<keyword id="KW-1003">Cell membrane</keyword>
<keyword id="KW-0133">Cell shape</keyword>
<keyword id="KW-0961">Cell wall biogenesis/degradation</keyword>
<keyword id="KW-0460">Magnesium</keyword>
<keyword id="KW-0472">Membrane</keyword>
<keyword id="KW-0479">Metal-binding</keyword>
<keyword id="KW-0573">Peptidoglycan synthesis</keyword>
<keyword id="KW-1185">Reference proteome</keyword>
<keyword id="KW-0808">Transferase</keyword>
<keyword id="KW-0812">Transmembrane</keyword>
<keyword id="KW-1133">Transmembrane helix</keyword>
<comment type="function">
    <text evidence="1">Catalyzes the initial step of the lipid cycle reactions in the biosynthesis of the cell wall peptidoglycan: transfers peptidoglycan precursor phospho-MurNAc-pentapeptide from UDP-MurNAc-pentapeptide onto the lipid carrier undecaprenyl phosphate, yielding undecaprenyl-pyrophosphoryl-MurNAc-pentapeptide, known as lipid I.</text>
</comment>
<comment type="catalytic activity">
    <reaction evidence="1">
        <text>UDP-N-acetyl-alpha-D-muramoyl-L-alanyl-gamma-D-glutamyl-L-lysyl-D-alanyl-D-alanine + di-trans,octa-cis-undecaprenyl phosphate = Mur2Ac(oyl-L-Ala-gamma-D-Glu-L-Lys-D-Ala-D-Ala)-di-trans,octa-cis-undecaprenyl diphosphate + UMP</text>
        <dbReference type="Rhea" id="RHEA:21920"/>
        <dbReference type="ChEBI" id="CHEBI:57865"/>
        <dbReference type="ChEBI" id="CHEBI:60032"/>
        <dbReference type="ChEBI" id="CHEBI:60392"/>
        <dbReference type="ChEBI" id="CHEBI:70758"/>
        <dbReference type="EC" id="2.7.8.13"/>
    </reaction>
</comment>
<comment type="cofactor">
    <cofactor evidence="1">
        <name>Mg(2+)</name>
        <dbReference type="ChEBI" id="CHEBI:18420"/>
    </cofactor>
</comment>
<comment type="pathway">
    <text evidence="1">Cell wall biogenesis; peptidoglycan biosynthesis.</text>
</comment>
<comment type="subcellular location">
    <subcellularLocation>
        <location evidence="1">Cell membrane</location>
        <topology evidence="1">Multi-pass membrane protein</topology>
    </subcellularLocation>
</comment>
<comment type="similarity">
    <text evidence="1">Belongs to the glycosyltransferase 4 family. MraY subfamily.</text>
</comment>
<sequence>MMNILLPLLGGFIITAAFMPALIRYFRARHEGQMIREEGPTWHEKKSGTPTMGGLLFIVAIAVMTLLTSWVLAPHHMLPTTWILIFILVLYGALGMWDDSIKLFHRQNEGLKAWQKMLGQIVGALILFWVYTHEQLPMALHVPGIGNWHMSGWYAVFVILWLVGFSNAVNLSDGLDGLVSGLASIAFAAYGIVAWQQAQINIAIFCFAVVGSLLGFLIFNHKPAKIFMGDTGSLALGGALAAVSILLHHELSLLWIGLIFVIETASVILQVASFKLTGKRIFLMSPIHHHFEMKGWSEWRIDLTFWGIGLVTALSGVWVILAK</sequence>
<gene>
    <name evidence="1" type="primary">mraY</name>
    <name type="ordered locus">LVIS_1451</name>
</gene>
<dbReference type="EC" id="2.7.8.13" evidence="1"/>
<dbReference type="EMBL" id="CP000416">
    <property type="protein sequence ID" value="ABJ64549.1"/>
    <property type="molecule type" value="Genomic_DNA"/>
</dbReference>
<dbReference type="RefSeq" id="WP_011668177.1">
    <property type="nucleotide sequence ID" value="NC_008497.1"/>
</dbReference>
<dbReference type="SMR" id="Q03QH3"/>
<dbReference type="STRING" id="387344.LVIS_1451"/>
<dbReference type="KEGG" id="lbr:LVIS_1451"/>
<dbReference type="eggNOG" id="COG0472">
    <property type="taxonomic scope" value="Bacteria"/>
</dbReference>
<dbReference type="HOGENOM" id="CLU_023982_0_1_9"/>
<dbReference type="UniPathway" id="UPA00219"/>
<dbReference type="Proteomes" id="UP000001652">
    <property type="component" value="Chromosome"/>
</dbReference>
<dbReference type="GO" id="GO:0005886">
    <property type="term" value="C:plasma membrane"/>
    <property type="evidence" value="ECO:0007669"/>
    <property type="project" value="UniProtKB-SubCell"/>
</dbReference>
<dbReference type="GO" id="GO:0046872">
    <property type="term" value="F:metal ion binding"/>
    <property type="evidence" value="ECO:0007669"/>
    <property type="project" value="UniProtKB-KW"/>
</dbReference>
<dbReference type="GO" id="GO:0008963">
    <property type="term" value="F:phospho-N-acetylmuramoyl-pentapeptide-transferase activity"/>
    <property type="evidence" value="ECO:0007669"/>
    <property type="project" value="UniProtKB-UniRule"/>
</dbReference>
<dbReference type="GO" id="GO:0051301">
    <property type="term" value="P:cell division"/>
    <property type="evidence" value="ECO:0007669"/>
    <property type="project" value="UniProtKB-KW"/>
</dbReference>
<dbReference type="GO" id="GO:0071555">
    <property type="term" value="P:cell wall organization"/>
    <property type="evidence" value="ECO:0007669"/>
    <property type="project" value="UniProtKB-KW"/>
</dbReference>
<dbReference type="GO" id="GO:0009252">
    <property type="term" value="P:peptidoglycan biosynthetic process"/>
    <property type="evidence" value="ECO:0007669"/>
    <property type="project" value="UniProtKB-UniRule"/>
</dbReference>
<dbReference type="GO" id="GO:0008360">
    <property type="term" value="P:regulation of cell shape"/>
    <property type="evidence" value="ECO:0007669"/>
    <property type="project" value="UniProtKB-KW"/>
</dbReference>
<dbReference type="CDD" id="cd06852">
    <property type="entry name" value="GT_MraY"/>
    <property type="match status" value="1"/>
</dbReference>
<dbReference type="HAMAP" id="MF_00038">
    <property type="entry name" value="MraY"/>
    <property type="match status" value="1"/>
</dbReference>
<dbReference type="InterPro" id="IPR000715">
    <property type="entry name" value="Glycosyl_transferase_4"/>
</dbReference>
<dbReference type="InterPro" id="IPR003524">
    <property type="entry name" value="PNAcMuramoyl-5peptid_Trfase"/>
</dbReference>
<dbReference type="InterPro" id="IPR018480">
    <property type="entry name" value="PNAcMuramoyl-5peptid_Trfase_CS"/>
</dbReference>
<dbReference type="NCBIfam" id="TIGR00445">
    <property type="entry name" value="mraY"/>
    <property type="match status" value="1"/>
</dbReference>
<dbReference type="PANTHER" id="PTHR22926">
    <property type="entry name" value="PHOSPHO-N-ACETYLMURAMOYL-PENTAPEPTIDE-TRANSFERASE"/>
    <property type="match status" value="1"/>
</dbReference>
<dbReference type="PANTHER" id="PTHR22926:SF5">
    <property type="entry name" value="PHOSPHO-N-ACETYLMURAMOYL-PENTAPEPTIDE-TRANSFERASE HOMOLOG"/>
    <property type="match status" value="1"/>
</dbReference>
<dbReference type="Pfam" id="PF00953">
    <property type="entry name" value="Glycos_transf_4"/>
    <property type="match status" value="1"/>
</dbReference>
<dbReference type="Pfam" id="PF10555">
    <property type="entry name" value="MraY_sig1"/>
    <property type="match status" value="1"/>
</dbReference>
<dbReference type="PROSITE" id="PS01347">
    <property type="entry name" value="MRAY_1"/>
    <property type="match status" value="1"/>
</dbReference>
<dbReference type="PROSITE" id="PS01348">
    <property type="entry name" value="MRAY_2"/>
    <property type="match status" value="1"/>
</dbReference>
<accession>Q03QH3</accession>